<keyword id="KW-0732">Signal</keyword>
<sequence length="251" mass="28318">MRILIILSIILCSLFARADLEYVDNDIYNYNGGRNENGCLEVYDPYEKFNRKVFAFNSVLDYIILRPLAIGYKNITNDYVKARVNSFVSNVDTPLTAVNYGLQLNYDKTMKSVWRFLINTTLGIGGLFDVAGKVGLPSERQTFGSTLAHYGVAPGPYLVLPIIGSTNARDMTDSVITNYALNPLMYYTHNDFDLGVLAVSKINDRYVVLPFSDYVMKNSTDPYVAIRSALHRAREASVQYPENFKCPKPKN</sequence>
<dbReference type="EMBL" id="CP000053">
    <property type="protein sequence ID" value="AAY60927.1"/>
    <property type="molecule type" value="Genomic_DNA"/>
</dbReference>
<dbReference type="SMR" id="Q4UND1"/>
<dbReference type="STRING" id="315456.RF_0076"/>
<dbReference type="KEGG" id="rfe:RF_0076"/>
<dbReference type="eggNOG" id="COG2853">
    <property type="taxonomic scope" value="Bacteria"/>
</dbReference>
<dbReference type="HOGENOM" id="CLU_059326_2_2_5"/>
<dbReference type="OrthoDB" id="9785326at2"/>
<dbReference type="Proteomes" id="UP000008548">
    <property type="component" value="Chromosome"/>
</dbReference>
<dbReference type="GO" id="GO:0016020">
    <property type="term" value="C:membrane"/>
    <property type="evidence" value="ECO:0007669"/>
    <property type="project" value="InterPro"/>
</dbReference>
<dbReference type="GO" id="GO:0120010">
    <property type="term" value="P:intermembrane phospholipid transfer"/>
    <property type="evidence" value="ECO:0007669"/>
    <property type="project" value="TreeGrafter"/>
</dbReference>
<dbReference type="InterPro" id="IPR007428">
    <property type="entry name" value="MlaA"/>
</dbReference>
<dbReference type="PANTHER" id="PTHR30035:SF3">
    <property type="entry name" value="INTERMEMBRANE PHOSPHOLIPID TRANSPORT SYSTEM LIPOPROTEIN MLAA"/>
    <property type="match status" value="1"/>
</dbReference>
<dbReference type="PANTHER" id="PTHR30035">
    <property type="entry name" value="LIPOPROTEIN VACJ-RELATED"/>
    <property type="match status" value="1"/>
</dbReference>
<dbReference type="Pfam" id="PF04333">
    <property type="entry name" value="MlaA"/>
    <property type="match status" value="1"/>
</dbReference>
<dbReference type="PRINTS" id="PR01805">
    <property type="entry name" value="VACJLIPOPROT"/>
</dbReference>
<organism>
    <name type="scientific">Rickettsia felis (strain ATCC VR-1525 / URRWXCal2)</name>
    <name type="common">Rickettsia azadi</name>
    <dbReference type="NCBI Taxonomy" id="315456"/>
    <lineage>
        <taxon>Bacteria</taxon>
        <taxon>Pseudomonadati</taxon>
        <taxon>Pseudomonadota</taxon>
        <taxon>Alphaproteobacteria</taxon>
        <taxon>Rickettsiales</taxon>
        <taxon>Rickettsiaceae</taxon>
        <taxon>Rickettsieae</taxon>
        <taxon>Rickettsia</taxon>
        <taxon>spotted fever group</taxon>
    </lineage>
</organism>
<gene>
    <name type="ordered locus">RF_0076</name>
</gene>
<evidence type="ECO:0000255" key="1"/>
<evidence type="ECO:0000305" key="2"/>
<name>Y076_RICFE</name>
<accession>Q4UND1</accession>
<protein>
    <recommendedName>
        <fullName>Uncharacterized protein RF_0076</fullName>
    </recommendedName>
</protein>
<reference key="1">
    <citation type="journal article" date="2005" name="PLoS Biol.">
        <title>The genome sequence of Rickettsia felis identifies the first putative conjugative plasmid in an obligate intracellular parasite.</title>
        <authorList>
            <person name="Ogata H."/>
            <person name="Renesto P."/>
            <person name="Audic S."/>
            <person name="Robert C."/>
            <person name="Blanc G."/>
            <person name="Fournier P.-E."/>
            <person name="Parinello H."/>
            <person name="Claverie J.-M."/>
            <person name="Raoult D."/>
        </authorList>
    </citation>
    <scope>NUCLEOTIDE SEQUENCE [LARGE SCALE GENOMIC DNA]</scope>
    <source>
        <strain>ATCC VR-1525 / URRWXCal2</strain>
    </source>
</reference>
<proteinExistence type="inferred from homology"/>
<comment type="similarity">
    <text evidence="2">Belongs to the MlaA family.</text>
</comment>
<feature type="signal peptide" evidence="1">
    <location>
        <begin position="1"/>
        <end position="18"/>
    </location>
</feature>
<feature type="chain" id="PRO_0000263036" description="Uncharacterized protein RF_0076">
    <location>
        <begin position="19"/>
        <end position="251"/>
    </location>
</feature>